<reference key="1">
    <citation type="journal article" date="2003" name="Proc. Natl. Acad. Sci. U.S.A.">
        <title>Complete genome sequence and analysis of Wolinella succinogenes.</title>
        <authorList>
            <person name="Baar C."/>
            <person name="Eppinger M."/>
            <person name="Raddatz G."/>
            <person name="Simon J."/>
            <person name="Lanz C."/>
            <person name="Klimmek O."/>
            <person name="Nandakumar R."/>
            <person name="Gross R."/>
            <person name="Rosinus A."/>
            <person name="Keller H."/>
            <person name="Jagtap P."/>
            <person name="Linke B."/>
            <person name="Meyer F."/>
            <person name="Lederer H."/>
            <person name="Schuster S.C."/>
        </authorList>
    </citation>
    <scope>NUCLEOTIDE SEQUENCE [LARGE SCALE GENOMIC DNA]</scope>
    <source>
        <strain>ATCC 29543 / DSM 1740 / CCUG 13145 / JCM 31913 / LMG 7466 / NCTC 11488 / FDC 602W</strain>
    </source>
</reference>
<dbReference type="EC" id="2.1.3.15" evidence="1"/>
<dbReference type="EMBL" id="BX571658">
    <property type="protein sequence ID" value="CAE09759.1"/>
    <property type="molecule type" value="Genomic_DNA"/>
</dbReference>
<dbReference type="RefSeq" id="WP_011138559.1">
    <property type="nucleotide sequence ID" value="NC_005090.1"/>
</dbReference>
<dbReference type="SMR" id="Q7M9W3"/>
<dbReference type="STRING" id="273121.WS0628"/>
<dbReference type="KEGG" id="wsu:WS0628"/>
<dbReference type="eggNOG" id="COG0825">
    <property type="taxonomic scope" value="Bacteria"/>
</dbReference>
<dbReference type="HOGENOM" id="CLU_015486_0_2_7"/>
<dbReference type="UniPathway" id="UPA00655">
    <property type="reaction ID" value="UER00711"/>
</dbReference>
<dbReference type="Proteomes" id="UP000000422">
    <property type="component" value="Chromosome"/>
</dbReference>
<dbReference type="GO" id="GO:0009317">
    <property type="term" value="C:acetyl-CoA carboxylase complex"/>
    <property type="evidence" value="ECO:0007669"/>
    <property type="project" value="InterPro"/>
</dbReference>
<dbReference type="GO" id="GO:0003989">
    <property type="term" value="F:acetyl-CoA carboxylase activity"/>
    <property type="evidence" value="ECO:0007669"/>
    <property type="project" value="InterPro"/>
</dbReference>
<dbReference type="GO" id="GO:0005524">
    <property type="term" value="F:ATP binding"/>
    <property type="evidence" value="ECO:0007669"/>
    <property type="project" value="UniProtKB-KW"/>
</dbReference>
<dbReference type="GO" id="GO:0016743">
    <property type="term" value="F:carboxyl- or carbamoyltransferase activity"/>
    <property type="evidence" value="ECO:0007669"/>
    <property type="project" value="UniProtKB-UniRule"/>
</dbReference>
<dbReference type="GO" id="GO:0006633">
    <property type="term" value="P:fatty acid biosynthetic process"/>
    <property type="evidence" value="ECO:0007669"/>
    <property type="project" value="UniProtKB-KW"/>
</dbReference>
<dbReference type="GO" id="GO:2001295">
    <property type="term" value="P:malonyl-CoA biosynthetic process"/>
    <property type="evidence" value="ECO:0007669"/>
    <property type="project" value="UniProtKB-UniRule"/>
</dbReference>
<dbReference type="Gene3D" id="3.90.226.10">
    <property type="entry name" value="2-enoyl-CoA Hydratase, Chain A, domain 1"/>
    <property type="match status" value="1"/>
</dbReference>
<dbReference type="HAMAP" id="MF_00823">
    <property type="entry name" value="AcetylCoA_CT_alpha"/>
    <property type="match status" value="1"/>
</dbReference>
<dbReference type="InterPro" id="IPR001095">
    <property type="entry name" value="Acetyl_CoA_COase_a_su"/>
</dbReference>
<dbReference type="InterPro" id="IPR029045">
    <property type="entry name" value="ClpP/crotonase-like_dom_sf"/>
</dbReference>
<dbReference type="InterPro" id="IPR011763">
    <property type="entry name" value="COA_CT_C"/>
</dbReference>
<dbReference type="NCBIfam" id="TIGR00513">
    <property type="entry name" value="accA"/>
    <property type="match status" value="1"/>
</dbReference>
<dbReference type="NCBIfam" id="NF041504">
    <property type="entry name" value="AccA_sub"/>
    <property type="match status" value="1"/>
</dbReference>
<dbReference type="NCBIfam" id="NF004344">
    <property type="entry name" value="PRK05724.1"/>
    <property type="match status" value="1"/>
</dbReference>
<dbReference type="PANTHER" id="PTHR42853">
    <property type="entry name" value="ACETYL-COENZYME A CARBOXYLASE CARBOXYL TRANSFERASE SUBUNIT ALPHA"/>
    <property type="match status" value="1"/>
</dbReference>
<dbReference type="PANTHER" id="PTHR42853:SF3">
    <property type="entry name" value="ACETYL-COENZYME A CARBOXYLASE CARBOXYL TRANSFERASE SUBUNIT ALPHA, CHLOROPLASTIC"/>
    <property type="match status" value="1"/>
</dbReference>
<dbReference type="Pfam" id="PF03255">
    <property type="entry name" value="ACCA"/>
    <property type="match status" value="1"/>
</dbReference>
<dbReference type="PRINTS" id="PR01069">
    <property type="entry name" value="ACCCTRFRASEA"/>
</dbReference>
<dbReference type="SUPFAM" id="SSF52096">
    <property type="entry name" value="ClpP/crotonase"/>
    <property type="match status" value="1"/>
</dbReference>
<dbReference type="PROSITE" id="PS50989">
    <property type="entry name" value="COA_CT_CTER"/>
    <property type="match status" value="1"/>
</dbReference>
<protein>
    <recommendedName>
        <fullName evidence="1">Acetyl-coenzyme A carboxylase carboxyl transferase subunit alpha</fullName>
        <shortName evidence="1">ACCase subunit alpha</shortName>
        <shortName evidence="1">Acetyl-CoA carboxylase carboxyltransferase subunit alpha</shortName>
        <ecNumber evidence="1">2.1.3.15</ecNumber>
    </recommendedName>
</protein>
<name>ACCA_WOLSU</name>
<accession>Q7M9W3</accession>
<feature type="chain" id="PRO_0000223853" description="Acetyl-coenzyme A carboxylase carboxyl transferase subunit alpha">
    <location>
        <begin position="1"/>
        <end position="311"/>
    </location>
</feature>
<feature type="domain" description="CoA carboxyltransferase C-terminal" evidence="2">
    <location>
        <begin position="36"/>
        <end position="286"/>
    </location>
</feature>
<organism>
    <name type="scientific">Wolinella succinogenes (strain ATCC 29543 / DSM 1740 / CCUG 13145 / JCM 31913 / LMG 7466 / NCTC 11488 / FDC 602W)</name>
    <name type="common">Vibrio succinogenes</name>
    <dbReference type="NCBI Taxonomy" id="273121"/>
    <lineage>
        <taxon>Bacteria</taxon>
        <taxon>Pseudomonadati</taxon>
        <taxon>Campylobacterota</taxon>
        <taxon>Epsilonproteobacteria</taxon>
        <taxon>Campylobacterales</taxon>
        <taxon>Helicobacteraceae</taxon>
        <taxon>Wolinella</taxon>
    </lineage>
</organism>
<sequence length="311" mass="34801">MATYLDFEQKIKNIQDEIESSIVKGDSHAKEILERELKKEVERVYSNLSDYQKLQLARHPDRPYAMDYIKLILKDAYEIHGDRHFSDDGAIVAFLGYIEGEKVIVIGEEKGRGTKNKLARNFGMPNPEGYRKALRIAKLAERFEIPLLMLIDTPGAYPGIGAEERGQSEAIAKNLQEFSQLKIPTVSVVIGEGGSGGALAIGVADRLAMMRYSVFSVISPEGCAAILWNDPSKIESATKAMKITPDELKKANLIDDIIEEPEIGAHRDKEGAAKSLVNYFLKSLEEIRGEEHYLQKRFDRLMSYGSFTQSA</sequence>
<proteinExistence type="inferred from homology"/>
<keyword id="KW-0067">ATP-binding</keyword>
<keyword id="KW-0963">Cytoplasm</keyword>
<keyword id="KW-0275">Fatty acid biosynthesis</keyword>
<keyword id="KW-0276">Fatty acid metabolism</keyword>
<keyword id="KW-0444">Lipid biosynthesis</keyword>
<keyword id="KW-0443">Lipid metabolism</keyword>
<keyword id="KW-0547">Nucleotide-binding</keyword>
<keyword id="KW-1185">Reference proteome</keyword>
<keyword id="KW-0808">Transferase</keyword>
<gene>
    <name evidence="1" type="primary">accA</name>
    <name type="ordered locus">WS0628</name>
</gene>
<comment type="function">
    <text evidence="1">Component of the acetyl coenzyme A carboxylase (ACC) complex. First, biotin carboxylase catalyzes the carboxylation of biotin on its carrier protein (BCCP) and then the CO(2) group is transferred by the carboxyltransferase to acetyl-CoA to form malonyl-CoA.</text>
</comment>
<comment type="catalytic activity">
    <reaction evidence="1">
        <text>N(6)-carboxybiotinyl-L-lysyl-[protein] + acetyl-CoA = N(6)-biotinyl-L-lysyl-[protein] + malonyl-CoA</text>
        <dbReference type="Rhea" id="RHEA:54728"/>
        <dbReference type="Rhea" id="RHEA-COMP:10505"/>
        <dbReference type="Rhea" id="RHEA-COMP:10506"/>
        <dbReference type="ChEBI" id="CHEBI:57288"/>
        <dbReference type="ChEBI" id="CHEBI:57384"/>
        <dbReference type="ChEBI" id="CHEBI:83144"/>
        <dbReference type="ChEBI" id="CHEBI:83145"/>
        <dbReference type="EC" id="2.1.3.15"/>
    </reaction>
</comment>
<comment type="pathway">
    <text evidence="1">Lipid metabolism; malonyl-CoA biosynthesis; malonyl-CoA from acetyl-CoA: step 1/1.</text>
</comment>
<comment type="subunit">
    <text evidence="1">Acetyl-CoA carboxylase is a heterohexamer composed of biotin carboxyl carrier protein (AccB), biotin carboxylase (AccC) and two subunits each of ACCase subunit alpha (AccA) and ACCase subunit beta (AccD).</text>
</comment>
<comment type="subcellular location">
    <subcellularLocation>
        <location evidence="1">Cytoplasm</location>
    </subcellularLocation>
</comment>
<comment type="similarity">
    <text evidence="1">Belongs to the AccA family.</text>
</comment>
<evidence type="ECO:0000255" key="1">
    <source>
        <dbReference type="HAMAP-Rule" id="MF_00823"/>
    </source>
</evidence>
<evidence type="ECO:0000255" key="2">
    <source>
        <dbReference type="PROSITE-ProRule" id="PRU01137"/>
    </source>
</evidence>